<comment type="function">
    <text evidence="1">One of several proteins that assist in the late maturation steps of the functional core of the 30S ribosomal subunit. Helps release RbfA from mature subunits. May play a role in the assembly of ribosomal proteins into the subunit. Circularly permuted GTPase that catalyzes slow GTP hydrolysis, GTPase activity is stimulated by the 30S ribosomal subunit.</text>
</comment>
<comment type="cofactor">
    <cofactor evidence="1">
        <name>Zn(2+)</name>
        <dbReference type="ChEBI" id="CHEBI:29105"/>
    </cofactor>
    <text evidence="1">Binds 1 zinc ion per subunit.</text>
</comment>
<comment type="subunit">
    <text evidence="1">Monomer. Associates with 30S ribosomal subunit, binds 16S rRNA.</text>
</comment>
<comment type="subcellular location">
    <subcellularLocation>
        <location evidence="1">Cytoplasm</location>
    </subcellularLocation>
</comment>
<comment type="similarity">
    <text evidence="1">Belongs to the TRAFAC class YlqF/YawG GTPase family. RsgA subfamily.</text>
</comment>
<protein>
    <recommendedName>
        <fullName evidence="1">Small ribosomal subunit biogenesis GTPase RsgA</fullName>
        <ecNumber evidence="1">3.6.1.-</ecNumber>
    </recommendedName>
</protein>
<keyword id="KW-0963">Cytoplasm</keyword>
<keyword id="KW-0342">GTP-binding</keyword>
<keyword id="KW-0378">Hydrolase</keyword>
<keyword id="KW-0479">Metal-binding</keyword>
<keyword id="KW-0547">Nucleotide-binding</keyword>
<keyword id="KW-1185">Reference proteome</keyword>
<keyword id="KW-0690">Ribosome biogenesis</keyword>
<keyword id="KW-0694">RNA-binding</keyword>
<keyword id="KW-0699">rRNA-binding</keyword>
<keyword id="KW-0862">Zinc</keyword>
<feature type="chain" id="PRO_1000188113" description="Small ribosomal subunit biogenesis GTPase RsgA">
    <location>
        <begin position="1"/>
        <end position="351"/>
    </location>
</feature>
<feature type="domain" description="CP-type G" evidence="2">
    <location>
        <begin position="112"/>
        <end position="274"/>
    </location>
</feature>
<feature type="region of interest" description="Disordered" evidence="3">
    <location>
        <begin position="1"/>
        <end position="37"/>
    </location>
</feature>
<feature type="compositionally biased region" description="Basic residues" evidence="3">
    <location>
        <begin position="1"/>
        <end position="12"/>
    </location>
</feature>
<feature type="compositionally biased region" description="Basic and acidic residues" evidence="3">
    <location>
        <begin position="13"/>
        <end position="31"/>
    </location>
</feature>
<feature type="binding site" evidence="1">
    <location>
        <begin position="160"/>
        <end position="163"/>
    </location>
    <ligand>
        <name>GTP</name>
        <dbReference type="ChEBI" id="CHEBI:37565"/>
    </ligand>
</feature>
<feature type="binding site" evidence="1">
    <location>
        <begin position="214"/>
        <end position="222"/>
    </location>
    <ligand>
        <name>GTP</name>
        <dbReference type="ChEBI" id="CHEBI:37565"/>
    </ligand>
</feature>
<feature type="binding site" evidence="1">
    <location>
        <position position="298"/>
    </location>
    <ligand>
        <name>Zn(2+)</name>
        <dbReference type="ChEBI" id="CHEBI:29105"/>
    </ligand>
</feature>
<feature type="binding site" evidence="1">
    <location>
        <position position="303"/>
    </location>
    <ligand>
        <name>Zn(2+)</name>
        <dbReference type="ChEBI" id="CHEBI:29105"/>
    </ligand>
</feature>
<feature type="binding site" evidence="1">
    <location>
        <position position="305"/>
    </location>
    <ligand>
        <name>Zn(2+)</name>
        <dbReference type="ChEBI" id="CHEBI:29105"/>
    </ligand>
</feature>
<feature type="binding site" evidence="1">
    <location>
        <position position="311"/>
    </location>
    <ligand>
        <name>Zn(2+)</name>
        <dbReference type="ChEBI" id="CHEBI:29105"/>
    </ligand>
</feature>
<dbReference type="EC" id="3.6.1.-" evidence="1"/>
<dbReference type="EMBL" id="BX571874">
    <property type="protein sequence ID" value="CAE16968.1"/>
    <property type="molecule type" value="Genomic_DNA"/>
</dbReference>
<dbReference type="RefSeq" id="WP_011148669.1">
    <property type="nucleotide sequence ID" value="NC_005126.1"/>
</dbReference>
<dbReference type="SMR" id="Q7MYS7"/>
<dbReference type="STRING" id="243265.plu4596"/>
<dbReference type="GeneID" id="48850811"/>
<dbReference type="KEGG" id="plu:plu4596"/>
<dbReference type="eggNOG" id="COG1162">
    <property type="taxonomic scope" value="Bacteria"/>
</dbReference>
<dbReference type="HOGENOM" id="CLU_033617_2_0_6"/>
<dbReference type="OrthoDB" id="9809485at2"/>
<dbReference type="Proteomes" id="UP000002514">
    <property type="component" value="Chromosome"/>
</dbReference>
<dbReference type="GO" id="GO:0005737">
    <property type="term" value="C:cytoplasm"/>
    <property type="evidence" value="ECO:0007669"/>
    <property type="project" value="UniProtKB-SubCell"/>
</dbReference>
<dbReference type="GO" id="GO:0005525">
    <property type="term" value="F:GTP binding"/>
    <property type="evidence" value="ECO:0007669"/>
    <property type="project" value="UniProtKB-UniRule"/>
</dbReference>
<dbReference type="GO" id="GO:0003924">
    <property type="term" value="F:GTPase activity"/>
    <property type="evidence" value="ECO:0007669"/>
    <property type="project" value="UniProtKB-UniRule"/>
</dbReference>
<dbReference type="GO" id="GO:0046872">
    <property type="term" value="F:metal ion binding"/>
    <property type="evidence" value="ECO:0007669"/>
    <property type="project" value="UniProtKB-KW"/>
</dbReference>
<dbReference type="GO" id="GO:0019843">
    <property type="term" value="F:rRNA binding"/>
    <property type="evidence" value="ECO:0007669"/>
    <property type="project" value="UniProtKB-KW"/>
</dbReference>
<dbReference type="GO" id="GO:0042274">
    <property type="term" value="P:ribosomal small subunit biogenesis"/>
    <property type="evidence" value="ECO:0007669"/>
    <property type="project" value="UniProtKB-UniRule"/>
</dbReference>
<dbReference type="CDD" id="cd01854">
    <property type="entry name" value="YjeQ_EngC"/>
    <property type="match status" value="1"/>
</dbReference>
<dbReference type="Gene3D" id="2.40.50.140">
    <property type="entry name" value="Nucleic acid-binding proteins"/>
    <property type="match status" value="1"/>
</dbReference>
<dbReference type="Gene3D" id="3.40.50.300">
    <property type="entry name" value="P-loop containing nucleotide triphosphate hydrolases"/>
    <property type="match status" value="1"/>
</dbReference>
<dbReference type="Gene3D" id="1.10.40.50">
    <property type="entry name" value="Probable gtpase engc, domain 3"/>
    <property type="match status" value="1"/>
</dbReference>
<dbReference type="HAMAP" id="MF_01820">
    <property type="entry name" value="GTPase_RsgA"/>
    <property type="match status" value="1"/>
</dbReference>
<dbReference type="InterPro" id="IPR030378">
    <property type="entry name" value="G_CP_dom"/>
</dbReference>
<dbReference type="InterPro" id="IPR012340">
    <property type="entry name" value="NA-bd_OB-fold"/>
</dbReference>
<dbReference type="InterPro" id="IPR027417">
    <property type="entry name" value="P-loop_NTPase"/>
</dbReference>
<dbReference type="InterPro" id="IPR004881">
    <property type="entry name" value="Ribosome_biogen_GTPase_RsgA"/>
</dbReference>
<dbReference type="InterPro" id="IPR010914">
    <property type="entry name" value="RsgA_GTPase_dom"/>
</dbReference>
<dbReference type="NCBIfam" id="NF008931">
    <property type="entry name" value="PRK12288.1"/>
    <property type="match status" value="1"/>
</dbReference>
<dbReference type="NCBIfam" id="TIGR00157">
    <property type="entry name" value="ribosome small subunit-dependent GTPase A"/>
    <property type="match status" value="1"/>
</dbReference>
<dbReference type="PANTHER" id="PTHR32120">
    <property type="entry name" value="SMALL RIBOSOMAL SUBUNIT BIOGENESIS GTPASE RSGA"/>
    <property type="match status" value="1"/>
</dbReference>
<dbReference type="PANTHER" id="PTHR32120:SF11">
    <property type="entry name" value="SMALL RIBOSOMAL SUBUNIT BIOGENESIS GTPASE RSGA 1, MITOCHONDRIAL-RELATED"/>
    <property type="match status" value="1"/>
</dbReference>
<dbReference type="Pfam" id="PF03193">
    <property type="entry name" value="RsgA_GTPase"/>
    <property type="match status" value="1"/>
</dbReference>
<dbReference type="SUPFAM" id="SSF52540">
    <property type="entry name" value="P-loop containing nucleoside triphosphate hydrolases"/>
    <property type="match status" value="1"/>
</dbReference>
<dbReference type="PROSITE" id="PS50936">
    <property type="entry name" value="ENGC_GTPASE"/>
    <property type="match status" value="1"/>
</dbReference>
<dbReference type="PROSITE" id="PS51721">
    <property type="entry name" value="G_CP"/>
    <property type="match status" value="1"/>
</dbReference>
<organism>
    <name type="scientific">Photorhabdus laumondii subsp. laumondii (strain DSM 15139 / CIP 105565 / TT01)</name>
    <name type="common">Photorhabdus luminescens subsp. laumondii</name>
    <dbReference type="NCBI Taxonomy" id="243265"/>
    <lineage>
        <taxon>Bacteria</taxon>
        <taxon>Pseudomonadati</taxon>
        <taxon>Pseudomonadota</taxon>
        <taxon>Gammaproteobacteria</taxon>
        <taxon>Enterobacterales</taxon>
        <taxon>Morganellaceae</taxon>
        <taxon>Photorhabdus</taxon>
    </lineage>
</organism>
<accession>Q7MYS7</accession>
<proteinExistence type="inferred from homology"/>
<evidence type="ECO:0000255" key="1">
    <source>
        <dbReference type="HAMAP-Rule" id="MF_01820"/>
    </source>
</evidence>
<evidence type="ECO:0000255" key="2">
    <source>
        <dbReference type="PROSITE-ProRule" id="PRU01058"/>
    </source>
</evidence>
<evidence type="ECO:0000256" key="3">
    <source>
        <dbReference type="SAM" id="MobiDB-lite"/>
    </source>
</evidence>
<gene>
    <name evidence="1" type="primary">rsgA</name>
    <name type="ordered locus">plu4596</name>
</gene>
<name>RSGA_PHOLL</name>
<sequence>MAKHKLSKGQQRRVRENHQRRLKKQDNKPEMDDNQLGEPQEGLVISRFGQHADVEAEDGSTQRCNIRRTIRSLVTGDRVVWRPSLQTQADVKVNGIVEAVHERTSVLTRPDYYDGIKPIAANIDQIVIVSAILPELSLNIIDRYLVACETLGIEPLIVLNKIDLLDEESRAWVNEIMSTYHNIGYRVLKLSSHTGEGMEELTKMLAGRITIFAGQSGVGKSSLLNTLLPEDEEEILVNQVSDVSGLGQHTTTASRLYHFPHGGDVIDSPGVREFGLWHLTSEQVTQGFVEFRDYLGGCKFRDCKHRDDPACALRKAVEDNEINQERFENYHRILDSMDQIKPRKTFTDNDS</sequence>
<reference key="1">
    <citation type="journal article" date="2003" name="Nat. Biotechnol.">
        <title>The genome sequence of the entomopathogenic bacterium Photorhabdus luminescens.</title>
        <authorList>
            <person name="Duchaud E."/>
            <person name="Rusniok C."/>
            <person name="Frangeul L."/>
            <person name="Buchrieser C."/>
            <person name="Givaudan A."/>
            <person name="Taourit S."/>
            <person name="Bocs S."/>
            <person name="Boursaux-Eude C."/>
            <person name="Chandler M."/>
            <person name="Charles J.-F."/>
            <person name="Dassa E."/>
            <person name="Derose R."/>
            <person name="Derzelle S."/>
            <person name="Freyssinet G."/>
            <person name="Gaudriault S."/>
            <person name="Medigue C."/>
            <person name="Lanois A."/>
            <person name="Powell K."/>
            <person name="Siguier P."/>
            <person name="Vincent R."/>
            <person name="Wingate V."/>
            <person name="Zouine M."/>
            <person name="Glaser P."/>
            <person name="Boemare N."/>
            <person name="Danchin A."/>
            <person name="Kunst F."/>
        </authorList>
    </citation>
    <scope>NUCLEOTIDE SEQUENCE [LARGE SCALE GENOMIC DNA]</scope>
    <source>
        <strain>DSM 15139 / CIP 105565 / TT01</strain>
    </source>
</reference>